<gene>
    <name evidence="1" type="primary">modC</name>
    <name type="ordered locus">amb3403</name>
</gene>
<organism>
    <name type="scientific">Paramagnetospirillum magneticum (strain ATCC 700264 / AMB-1)</name>
    <name type="common">Magnetospirillum magneticum</name>
    <dbReference type="NCBI Taxonomy" id="342108"/>
    <lineage>
        <taxon>Bacteria</taxon>
        <taxon>Pseudomonadati</taxon>
        <taxon>Pseudomonadota</taxon>
        <taxon>Alphaproteobacteria</taxon>
        <taxon>Rhodospirillales</taxon>
        <taxon>Magnetospirillaceae</taxon>
        <taxon>Paramagnetospirillum</taxon>
    </lineage>
</organism>
<feature type="chain" id="PRO_0000271676" description="Molybdenum import ATP-binding protein ModC">
    <location>
        <begin position="1"/>
        <end position="363"/>
    </location>
</feature>
<feature type="domain" description="ABC transporter" evidence="1">
    <location>
        <begin position="1"/>
        <end position="232"/>
    </location>
</feature>
<feature type="domain" description="Mop" evidence="2">
    <location>
        <begin position="292"/>
        <end position="358"/>
    </location>
</feature>
<feature type="binding site" evidence="1">
    <location>
        <begin position="30"/>
        <end position="37"/>
    </location>
    <ligand>
        <name>ATP</name>
        <dbReference type="ChEBI" id="CHEBI:30616"/>
    </ligand>
</feature>
<sequence>MLDLDLRRRQGEFRLDVRLSAGPGVTALYGRSGSGKTSVINMVAGLSRPDEGSISVDGRVLFDSRSGIDLPPEARRLGYVFQEHRLFPHLSVRGNLEFGQKLLPSAERTQSLDKVVELLGIESLLDRRPAKLSGGEKQRVAIGRALLASPRILLMDEPLAALDPARKAEVLPFIAQLARRFSVPILYVSHSMDEVLRLADTLALMDGGKVAASGPLESLMGDPGLRPLTGRYEAGAVIGAVVSSHDSGFGISRLAFDGGTLIVGRSELPVGAKVRLRIHARDVAIAIEPPDRVSIRNVLPAIVVSVAPADSFLVDVILACGPTRFWVQITTLAQAQLNLVPGMRVHALIKALTIARGDVASVD</sequence>
<dbReference type="EC" id="7.3.2.5" evidence="1"/>
<dbReference type="EMBL" id="AP007255">
    <property type="protein sequence ID" value="BAE52207.1"/>
    <property type="molecule type" value="Genomic_DNA"/>
</dbReference>
<dbReference type="RefSeq" id="WP_011385763.1">
    <property type="nucleotide sequence ID" value="NC_007626.1"/>
</dbReference>
<dbReference type="SMR" id="Q2W1R8"/>
<dbReference type="STRING" id="342108.amb3403"/>
<dbReference type="KEGG" id="mag:amb3403"/>
<dbReference type="HOGENOM" id="CLU_000604_1_1_5"/>
<dbReference type="OrthoDB" id="9802264at2"/>
<dbReference type="Proteomes" id="UP000007058">
    <property type="component" value="Chromosome"/>
</dbReference>
<dbReference type="GO" id="GO:0005886">
    <property type="term" value="C:plasma membrane"/>
    <property type="evidence" value="ECO:0007669"/>
    <property type="project" value="UniProtKB-SubCell"/>
</dbReference>
<dbReference type="GO" id="GO:0015412">
    <property type="term" value="F:ABC-type molybdate transporter activity"/>
    <property type="evidence" value="ECO:0007669"/>
    <property type="project" value="UniProtKB-EC"/>
</dbReference>
<dbReference type="GO" id="GO:0005524">
    <property type="term" value="F:ATP binding"/>
    <property type="evidence" value="ECO:0007669"/>
    <property type="project" value="UniProtKB-KW"/>
</dbReference>
<dbReference type="GO" id="GO:0016887">
    <property type="term" value="F:ATP hydrolysis activity"/>
    <property type="evidence" value="ECO:0007669"/>
    <property type="project" value="InterPro"/>
</dbReference>
<dbReference type="Gene3D" id="2.40.50.100">
    <property type="match status" value="1"/>
</dbReference>
<dbReference type="Gene3D" id="3.40.50.300">
    <property type="entry name" value="P-loop containing nucleotide triphosphate hydrolases"/>
    <property type="match status" value="1"/>
</dbReference>
<dbReference type="InterPro" id="IPR003593">
    <property type="entry name" value="AAA+_ATPase"/>
</dbReference>
<dbReference type="InterPro" id="IPR003439">
    <property type="entry name" value="ABC_transporter-like_ATP-bd"/>
</dbReference>
<dbReference type="InterPro" id="IPR017871">
    <property type="entry name" value="ABC_transporter-like_CS"/>
</dbReference>
<dbReference type="InterPro" id="IPR008995">
    <property type="entry name" value="Mo/tungstate-bd_C_term_dom"/>
</dbReference>
<dbReference type="InterPro" id="IPR011868">
    <property type="entry name" value="ModC_ABC_ATP-bd"/>
</dbReference>
<dbReference type="InterPro" id="IPR050334">
    <property type="entry name" value="Molybdenum_import_ModC"/>
</dbReference>
<dbReference type="InterPro" id="IPR004606">
    <property type="entry name" value="Mop_domain"/>
</dbReference>
<dbReference type="InterPro" id="IPR027417">
    <property type="entry name" value="P-loop_NTPase"/>
</dbReference>
<dbReference type="InterPro" id="IPR005116">
    <property type="entry name" value="Transp-assoc_OB_typ1"/>
</dbReference>
<dbReference type="NCBIfam" id="TIGR02142">
    <property type="entry name" value="modC_ABC"/>
    <property type="match status" value="1"/>
</dbReference>
<dbReference type="PANTHER" id="PTHR43514">
    <property type="entry name" value="ABC TRANSPORTER I FAMILY MEMBER 10"/>
    <property type="match status" value="1"/>
</dbReference>
<dbReference type="PANTHER" id="PTHR43514:SF4">
    <property type="entry name" value="ABC TRANSPORTER I FAMILY MEMBER 10"/>
    <property type="match status" value="1"/>
</dbReference>
<dbReference type="Pfam" id="PF00005">
    <property type="entry name" value="ABC_tran"/>
    <property type="match status" value="1"/>
</dbReference>
<dbReference type="Pfam" id="PF03459">
    <property type="entry name" value="TOBE"/>
    <property type="match status" value="1"/>
</dbReference>
<dbReference type="SMART" id="SM00382">
    <property type="entry name" value="AAA"/>
    <property type="match status" value="1"/>
</dbReference>
<dbReference type="SUPFAM" id="SSF50331">
    <property type="entry name" value="MOP-like"/>
    <property type="match status" value="1"/>
</dbReference>
<dbReference type="SUPFAM" id="SSF52540">
    <property type="entry name" value="P-loop containing nucleoside triphosphate hydrolases"/>
    <property type="match status" value="1"/>
</dbReference>
<dbReference type="PROSITE" id="PS00211">
    <property type="entry name" value="ABC_TRANSPORTER_1"/>
    <property type="match status" value="1"/>
</dbReference>
<dbReference type="PROSITE" id="PS50893">
    <property type="entry name" value="ABC_TRANSPORTER_2"/>
    <property type="match status" value="1"/>
</dbReference>
<dbReference type="PROSITE" id="PS51241">
    <property type="entry name" value="MODC"/>
    <property type="match status" value="1"/>
</dbReference>
<dbReference type="PROSITE" id="PS51866">
    <property type="entry name" value="MOP"/>
    <property type="match status" value="1"/>
</dbReference>
<comment type="function">
    <text evidence="1">Part of the ABC transporter complex ModABC involved in molybdenum import. Responsible for energy coupling to the transport system.</text>
</comment>
<comment type="catalytic activity">
    <reaction evidence="1">
        <text>molybdate(out) + ATP + H2O = molybdate(in) + ADP + phosphate + H(+)</text>
        <dbReference type="Rhea" id="RHEA:22020"/>
        <dbReference type="ChEBI" id="CHEBI:15377"/>
        <dbReference type="ChEBI" id="CHEBI:15378"/>
        <dbReference type="ChEBI" id="CHEBI:30616"/>
        <dbReference type="ChEBI" id="CHEBI:36264"/>
        <dbReference type="ChEBI" id="CHEBI:43474"/>
        <dbReference type="ChEBI" id="CHEBI:456216"/>
        <dbReference type="EC" id="7.3.2.5"/>
    </reaction>
</comment>
<comment type="subunit">
    <text evidence="1">The complex is composed of two ATP-binding proteins (ModC), two transmembrane proteins (ModB) and a solute-binding protein (ModA).</text>
</comment>
<comment type="subcellular location">
    <subcellularLocation>
        <location evidence="1">Cell inner membrane</location>
        <topology evidence="1">Peripheral membrane protein</topology>
    </subcellularLocation>
</comment>
<comment type="similarity">
    <text evidence="1">Belongs to the ABC transporter superfamily. Molybdate importer (TC 3.A.1.8) family.</text>
</comment>
<protein>
    <recommendedName>
        <fullName evidence="1">Molybdenum import ATP-binding protein ModC</fullName>
        <ecNumber evidence="1">7.3.2.5</ecNumber>
    </recommendedName>
</protein>
<evidence type="ECO:0000255" key="1">
    <source>
        <dbReference type="HAMAP-Rule" id="MF_01705"/>
    </source>
</evidence>
<evidence type="ECO:0000255" key="2">
    <source>
        <dbReference type="PROSITE-ProRule" id="PRU01213"/>
    </source>
</evidence>
<accession>Q2W1R8</accession>
<name>MODC_PARM1</name>
<proteinExistence type="inferred from homology"/>
<keyword id="KW-0067">ATP-binding</keyword>
<keyword id="KW-0997">Cell inner membrane</keyword>
<keyword id="KW-1003">Cell membrane</keyword>
<keyword id="KW-0472">Membrane</keyword>
<keyword id="KW-0500">Molybdenum</keyword>
<keyword id="KW-0547">Nucleotide-binding</keyword>
<keyword id="KW-1278">Translocase</keyword>
<keyword id="KW-0813">Transport</keyword>
<reference key="1">
    <citation type="journal article" date="2005" name="DNA Res.">
        <title>Complete genome sequence of the facultative anaerobic magnetotactic bacterium Magnetospirillum sp. strain AMB-1.</title>
        <authorList>
            <person name="Matsunaga T."/>
            <person name="Okamura Y."/>
            <person name="Fukuda Y."/>
            <person name="Wahyudi A.T."/>
            <person name="Murase Y."/>
            <person name="Takeyama H."/>
        </authorList>
    </citation>
    <scope>NUCLEOTIDE SEQUENCE [LARGE SCALE GENOMIC DNA]</scope>
    <source>
        <strain>ATCC 700264 / AMB-1</strain>
    </source>
</reference>